<reference key="1">
    <citation type="journal article" date="2003" name="Nucleic Acids Res.">
        <title>What's in the genome of a filamentous fungus? Analysis of the Neurospora genome sequence.</title>
        <authorList>
            <person name="Mannhaupt G."/>
            <person name="Montrone C."/>
            <person name="Haase D."/>
            <person name="Mewes H.-W."/>
            <person name="Aign V."/>
            <person name="Hoheisel J.D."/>
            <person name="Fartmann B."/>
            <person name="Nyakatura G."/>
            <person name="Kempken F."/>
            <person name="Maier J."/>
            <person name="Schulte U."/>
        </authorList>
    </citation>
    <scope>NUCLEOTIDE SEQUENCE [LARGE SCALE GENOMIC DNA]</scope>
    <source>
        <strain>ATCC 24698 / 74-OR23-1A / CBS 708.71 / DSM 1257 / FGSC 987</strain>
    </source>
</reference>
<reference key="2">
    <citation type="journal article" date="2003" name="Nature">
        <title>The genome sequence of the filamentous fungus Neurospora crassa.</title>
        <authorList>
            <person name="Galagan J.E."/>
            <person name="Calvo S.E."/>
            <person name="Borkovich K.A."/>
            <person name="Selker E.U."/>
            <person name="Read N.D."/>
            <person name="Jaffe D.B."/>
            <person name="FitzHugh W."/>
            <person name="Ma L.-J."/>
            <person name="Smirnov S."/>
            <person name="Purcell S."/>
            <person name="Rehman B."/>
            <person name="Elkins T."/>
            <person name="Engels R."/>
            <person name="Wang S."/>
            <person name="Nielsen C.B."/>
            <person name="Butler J."/>
            <person name="Endrizzi M."/>
            <person name="Qui D."/>
            <person name="Ianakiev P."/>
            <person name="Bell-Pedersen D."/>
            <person name="Nelson M.A."/>
            <person name="Werner-Washburne M."/>
            <person name="Selitrennikoff C.P."/>
            <person name="Kinsey J.A."/>
            <person name="Braun E.L."/>
            <person name="Zelter A."/>
            <person name="Schulte U."/>
            <person name="Kothe G.O."/>
            <person name="Jedd G."/>
            <person name="Mewes H.-W."/>
            <person name="Staben C."/>
            <person name="Marcotte E."/>
            <person name="Greenberg D."/>
            <person name="Roy A."/>
            <person name="Foley K."/>
            <person name="Naylor J."/>
            <person name="Stange-Thomann N."/>
            <person name="Barrett R."/>
            <person name="Gnerre S."/>
            <person name="Kamal M."/>
            <person name="Kamvysselis M."/>
            <person name="Mauceli E.W."/>
            <person name="Bielke C."/>
            <person name="Rudd S."/>
            <person name="Frishman D."/>
            <person name="Krystofova S."/>
            <person name="Rasmussen C."/>
            <person name="Metzenberg R.L."/>
            <person name="Perkins D.D."/>
            <person name="Kroken S."/>
            <person name="Cogoni C."/>
            <person name="Macino G."/>
            <person name="Catcheside D.E.A."/>
            <person name="Li W."/>
            <person name="Pratt R.J."/>
            <person name="Osmani S.A."/>
            <person name="DeSouza C.P.C."/>
            <person name="Glass N.L."/>
            <person name="Orbach M.J."/>
            <person name="Berglund J.A."/>
            <person name="Voelker R."/>
            <person name="Yarden O."/>
            <person name="Plamann M."/>
            <person name="Seiler S."/>
            <person name="Dunlap J.C."/>
            <person name="Radford A."/>
            <person name="Aramayo R."/>
            <person name="Natvig D.O."/>
            <person name="Alex L.A."/>
            <person name="Mannhaupt G."/>
            <person name="Ebbole D.J."/>
            <person name="Freitag M."/>
            <person name="Paulsen I."/>
            <person name="Sachs M.S."/>
            <person name="Lander E.S."/>
            <person name="Nusbaum C."/>
            <person name="Birren B.W."/>
        </authorList>
    </citation>
    <scope>NUCLEOTIDE SEQUENCE [LARGE SCALE GENOMIC DNA]</scope>
    <source>
        <strain>ATCC 24698 / 74-OR23-1A / CBS 708.71 / DSM 1257 / FGSC 987</strain>
    </source>
</reference>
<name>SYMM_NEUCR</name>
<accession>Q9C2H9</accession>
<accession>Q7RV17</accession>
<protein>
    <recommendedName>
        <fullName>Probable methionine--tRNA ligase, mitochondrial</fullName>
        <ecNumber>6.1.1.10</ecNumber>
    </recommendedName>
    <alternativeName>
        <fullName>Methionyl-tRNA synthetase</fullName>
        <shortName>MetRS</shortName>
    </alternativeName>
</protein>
<comment type="catalytic activity">
    <reaction>
        <text>tRNA(Met) + L-methionine + ATP = L-methionyl-tRNA(Met) + AMP + diphosphate</text>
        <dbReference type="Rhea" id="RHEA:13481"/>
        <dbReference type="Rhea" id="RHEA-COMP:9667"/>
        <dbReference type="Rhea" id="RHEA-COMP:9698"/>
        <dbReference type="ChEBI" id="CHEBI:30616"/>
        <dbReference type="ChEBI" id="CHEBI:33019"/>
        <dbReference type="ChEBI" id="CHEBI:57844"/>
        <dbReference type="ChEBI" id="CHEBI:78442"/>
        <dbReference type="ChEBI" id="CHEBI:78530"/>
        <dbReference type="ChEBI" id="CHEBI:456215"/>
        <dbReference type="EC" id="6.1.1.10"/>
    </reaction>
</comment>
<comment type="subcellular location">
    <subcellularLocation>
        <location>Mitochondrion matrix</location>
    </subcellularLocation>
</comment>
<comment type="similarity">
    <text evidence="3">Belongs to the class-I aminoacyl-tRNA synthetase family.</text>
</comment>
<dbReference type="EC" id="6.1.1.10"/>
<dbReference type="EMBL" id="AL513443">
    <property type="protein sequence ID" value="CAC28665.1"/>
    <property type="molecule type" value="Genomic_DNA"/>
</dbReference>
<dbReference type="EMBL" id="CM002240">
    <property type="protein sequence ID" value="EAA31870.1"/>
    <property type="molecule type" value="Genomic_DNA"/>
</dbReference>
<dbReference type="RefSeq" id="XP_961106.1">
    <property type="nucleotide sequence ID" value="XM_956013.2"/>
</dbReference>
<dbReference type="SMR" id="Q9C2H9"/>
<dbReference type="FunCoup" id="Q9C2H9">
    <property type="interactions" value="518"/>
</dbReference>
<dbReference type="STRING" id="367110.Q9C2H9"/>
<dbReference type="PaxDb" id="5141-EFNCRP00000003450"/>
<dbReference type="EnsemblFungi" id="EAA31870">
    <property type="protein sequence ID" value="EAA31870"/>
    <property type="gene ID" value="NCU03759"/>
</dbReference>
<dbReference type="GeneID" id="3877271"/>
<dbReference type="KEGG" id="ncr:NCU03759"/>
<dbReference type="VEuPathDB" id="FungiDB:NCU03759"/>
<dbReference type="HOGENOM" id="CLU_009710_9_0_1"/>
<dbReference type="InParanoid" id="Q9C2H9"/>
<dbReference type="OMA" id="MDTQAFC"/>
<dbReference type="OrthoDB" id="24670at2759"/>
<dbReference type="Proteomes" id="UP000001805">
    <property type="component" value="Chromosome 2, Linkage Group V"/>
</dbReference>
<dbReference type="GO" id="GO:0005759">
    <property type="term" value="C:mitochondrial matrix"/>
    <property type="evidence" value="ECO:0007669"/>
    <property type="project" value="UniProtKB-SubCell"/>
</dbReference>
<dbReference type="GO" id="GO:0005739">
    <property type="term" value="C:mitochondrion"/>
    <property type="evidence" value="ECO:0000318"/>
    <property type="project" value="GO_Central"/>
</dbReference>
<dbReference type="GO" id="GO:0005524">
    <property type="term" value="F:ATP binding"/>
    <property type="evidence" value="ECO:0007669"/>
    <property type="project" value="UniProtKB-KW"/>
</dbReference>
<dbReference type="GO" id="GO:0004825">
    <property type="term" value="F:methionine-tRNA ligase activity"/>
    <property type="evidence" value="ECO:0000318"/>
    <property type="project" value="GO_Central"/>
</dbReference>
<dbReference type="GO" id="GO:0006431">
    <property type="term" value="P:methionyl-tRNA aminoacylation"/>
    <property type="evidence" value="ECO:0000318"/>
    <property type="project" value="GO_Central"/>
</dbReference>
<dbReference type="CDD" id="cd00814">
    <property type="entry name" value="MetRS_core"/>
    <property type="match status" value="1"/>
</dbReference>
<dbReference type="FunFam" id="2.170.220.10:FF:000001">
    <property type="entry name" value="methionine--tRNA ligase, mitochondrial"/>
    <property type="match status" value="1"/>
</dbReference>
<dbReference type="Gene3D" id="2.170.220.10">
    <property type="match status" value="1"/>
</dbReference>
<dbReference type="Gene3D" id="3.40.50.620">
    <property type="entry name" value="HUPs"/>
    <property type="match status" value="1"/>
</dbReference>
<dbReference type="Gene3D" id="1.10.730.10">
    <property type="entry name" value="Isoleucyl-tRNA Synthetase, Domain 1"/>
    <property type="match status" value="1"/>
</dbReference>
<dbReference type="InterPro" id="IPR041872">
    <property type="entry name" value="Anticodon_Met"/>
</dbReference>
<dbReference type="InterPro" id="IPR014758">
    <property type="entry name" value="Met-tRNA_synth"/>
</dbReference>
<dbReference type="InterPro" id="IPR023457">
    <property type="entry name" value="Met-tRNA_synth_2"/>
</dbReference>
<dbReference type="InterPro" id="IPR015413">
    <property type="entry name" value="Methionyl/Leucyl_tRNA_Synth"/>
</dbReference>
<dbReference type="InterPro" id="IPR033911">
    <property type="entry name" value="MetRS_core"/>
</dbReference>
<dbReference type="InterPro" id="IPR014729">
    <property type="entry name" value="Rossmann-like_a/b/a_fold"/>
</dbReference>
<dbReference type="InterPro" id="IPR009080">
    <property type="entry name" value="tRNAsynth_Ia_anticodon-bd"/>
</dbReference>
<dbReference type="NCBIfam" id="TIGR00398">
    <property type="entry name" value="metG"/>
    <property type="match status" value="1"/>
</dbReference>
<dbReference type="PANTHER" id="PTHR43326:SF1">
    <property type="entry name" value="METHIONINE--TRNA LIGASE, MITOCHONDRIAL"/>
    <property type="match status" value="1"/>
</dbReference>
<dbReference type="PANTHER" id="PTHR43326">
    <property type="entry name" value="METHIONYL-TRNA SYNTHETASE"/>
    <property type="match status" value="1"/>
</dbReference>
<dbReference type="Pfam" id="PF19303">
    <property type="entry name" value="Anticodon_3"/>
    <property type="match status" value="1"/>
</dbReference>
<dbReference type="Pfam" id="PF09334">
    <property type="entry name" value="tRNA-synt_1g"/>
    <property type="match status" value="1"/>
</dbReference>
<dbReference type="PRINTS" id="PR01041">
    <property type="entry name" value="TRNASYNTHMET"/>
</dbReference>
<dbReference type="SUPFAM" id="SSF47323">
    <property type="entry name" value="Anticodon-binding domain of a subclass of class I aminoacyl-tRNA synthetases"/>
    <property type="match status" value="1"/>
</dbReference>
<dbReference type="SUPFAM" id="SSF52374">
    <property type="entry name" value="Nucleotidylyl transferase"/>
    <property type="match status" value="1"/>
</dbReference>
<proteinExistence type="inferred from homology"/>
<organism>
    <name type="scientific">Neurospora crassa (strain ATCC 24698 / 74-OR23-1A / CBS 708.71 / DSM 1257 / FGSC 987)</name>
    <dbReference type="NCBI Taxonomy" id="367110"/>
    <lineage>
        <taxon>Eukaryota</taxon>
        <taxon>Fungi</taxon>
        <taxon>Dikarya</taxon>
        <taxon>Ascomycota</taxon>
        <taxon>Pezizomycotina</taxon>
        <taxon>Sordariomycetes</taxon>
        <taxon>Sordariomycetidae</taxon>
        <taxon>Sordariales</taxon>
        <taxon>Sordariaceae</taxon>
        <taxon>Neurospora</taxon>
    </lineage>
</organism>
<feature type="chain" id="PRO_0000139271" description="Probable methionine--tRNA ligase, mitochondrial">
    <location>
        <begin position="1"/>
        <end position="622"/>
    </location>
</feature>
<feature type="region of interest" description="Disordered" evidence="2">
    <location>
        <begin position="592"/>
        <end position="622"/>
    </location>
</feature>
<feature type="short sequence motif" description="'HIGH' region">
    <location>
        <begin position="67"/>
        <end position="79"/>
    </location>
</feature>
<feature type="short sequence motif" description="'KMSKS' region">
    <location>
        <begin position="366"/>
        <end position="370"/>
    </location>
</feature>
<feature type="compositionally biased region" description="Low complexity" evidence="2">
    <location>
        <begin position="610"/>
        <end position="622"/>
    </location>
</feature>
<feature type="binding site" evidence="1">
    <location>
        <position position="369"/>
    </location>
    <ligand>
        <name>ATP</name>
        <dbReference type="ChEBI" id="CHEBI:30616"/>
    </ligand>
</feature>
<gene>
    <name type="ORF">93G11.130</name>
    <name type="ORF">NCU03759</name>
</gene>
<sequence length="622" mass="70623">MDVLRTASARRTFKWQAAGILARTSWVCRSCRSQFVAPKAARRTLATSTTTTTPTAPDNKPFYVTTPIFYVNASPHVGHMYSMVLGDVLKRWQTLKGNQAILCTGTDEHGTKVQRAAIANDMDPKQFCDLNSAKFQELAAACRIDYDRFMRTTDQDHVEAVKHFWLLLKEKGLIYEAKHEGWYCVSDECFYPESQLEKRQDPFTGEVYVASIESGNKVEWIEEKNYHFRMTALKDQLLEFYKNNPDWIVPQTRMNQVVDWVTNNLEDLSISRPVSRLSWGIRVPDDESQTIYVWVDALINYITMAGYPYWPPGREHLGGWPVDVHVIGKDILRFHCIYWPALLLALDLPLPKRILSHAHWTMEKKKMSKSIGNVVNPFYAMERFGIDTMRFYMIHNGGIANDADYSNDWLTVEYKKHLQNGVGNLSARVTRPKQWSLRRAVQSYQDGNMLLQSTGEQINDSCVEHITRLDKLASTIDNEMLQLNPSHALQKIMGLIGETNAFISNAEPWVIVKKQDSEALVDRIILTAGESLRIAGILLQPFMPDKAAQLLDLLGVENHNRTFHHARPLVDATYGTAFRTFGKEGIFPPPILDDIKGMGPDAGSKKHSSGNKPSSGNKKPTA</sequence>
<evidence type="ECO:0000250" key="1"/>
<evidence type="ECO:0000256" key="2">
    <source>
        <dbReference type="SAM" id="MobiDB-lite"/>
    </source>
</evidence>
<evidence type="ECO:0000305" key="3"/>
<keyword id="KW-0030">Aminoacyl-tRNA synthetase</keyword>
<keyword id="KW-0067">ATP-binding</keyword>
<keyword id="KW-0436">Ligase</keyword>
<keyword id="KW-0496">Mitochondrion</keyword>
<keyword id="KW-0547">Nucleotide-binding</keyword>
<keyword id="KW-0648">Protein biosynthesis</keyword>
<keyword id="KW-1185">Reference proteome</keyword>